<reference key="1">
    <citation type="submission" date="2007-06" db="EMBL/GenBank/DDBJ databases">
        <authorList>
            <consortium name="NIH - Mammalian Gene Collection (MGC) project"/>
        </authorList>
    </citation>
    <scope>NUCLEOTIDE SEQUENCE [LARGE SCALE MRNA]</scope>
    <source>
        <strain>Hereford</strain>
        <tissue>Thymus</tissue>
    </source>
</reference>
<name>R144B_BOVIN</name>
<feature type="chain" id="PRO_0000307194" description="E3 ubiquitin-protein ligase RNF144B">
    <location>
        <begin position="1"/>
        <end position="304"/>
    </location>
</feature>
<feature type="transmembrane region" description="Helical" evidence="4">
    <location>
        <begin position="259"/>
        <end position="279"/>
    </location>
</feature>
<feature type="zinc finger region" description="RING-type 1" evidence="5">
    <location>
        <begin position="31"/>
        <end position="81"/>
    </location>
</feature>
<feature type="zinc finger region" description="IBR-type" evidence="5">
    <location>
        <begin position="102"/>
        <end position="167"/>
    </location>
</feature>
<feature type="zinc finger region" description="RING-type 2; atypical" evidence="5">
    <location>
        <begin position="194"/>
        <end position="223"/>
    </location>
</feature>
<feature type="region of interest" description="TRIAD supradomain" evidence="5">
    <location>
        <begin position="27"/>
        <end position="245"/>
    </location>
</feature>
<feature type="active site" evidence="5">
    <location>
        <position position="207"/>
    </location>
</feature>
<feature type="binding site" evidence="5">
    <location>
        <position position="31"/>
    </location>
    <ligand>
        <name>Zn(2+)</name>
        <dbReference type="ChEBI" id="CHEBI:29105"/>
        <label>1</label>
    </ligand>
</feature>
<feature type="binding site" evidence="5">
    <location>
        <position position="34"/>
    </location>
    <ligand>
        <name>Zn(2+)</name>
        <dbReference type="ChEBI" id="CHEBI:29105"/>
        <label>1</label>
    </ligand>
</feature>
<feature type="binding site" evidence="5">
    <location>
        <position position="54"/>
    </location>
    <ligand>
        <name>Zn(2+)</name>
        <dbReference type="ChEBI" id="CHEBI:29105"/>
        <label>1</label>
    </ligand>
</feature>
<feature type="binding site" evidence="5">
    <location>
        <position position="57"/>
    </location>
    <ligand>
        <name>Zn(2+)</name>
        <dbReference type="ChEBI" id="CHEBI:29105"/>
        <label>1</label>
    </ligand>
</feature>
<feature type="binding site" evidence="5">
    <location>
        <position position="122"/>
    </location>
    <ligand>
        <name>Zn(2+)</name>
        <dbReference type="ChEBI" id="CHEBI:29105"/>
        <label>2</label>
    </ligand>
</feature>
<feature type="binding site" evidence="5">
    <location>
        <position position="127"/>
    </location>
    <ligand>
        <name>Zn(2+)</name>
        <dbReference type="ChEBI" id="CHEBI:29105"/>
        <label>2</label>
    </ligand>
</feature>
<feature type="binding site" evidence="5">
    <location>
        <position position="146"/>
    </location>
    <ligand>
        <name>Zn(2+)</name>
        <dbReference type="ChEBI" id="CHEBI:29105"/>
        <label>2</label>
    </ligand>
</feature>
<feature type="binding site" evidence="5">
    <location>
        <position position="149"/>
    </location>
    <ligand>
        <name>Zn(2+)</name>
        <dbReference type="ChEBI" id="CHEBI:29105"/>
        <label>2</label>
    </ligand>
</feature>
<feature type="binding site" evidence="5">
    <location>
        <position position="154"/>
    </location>
    <ligand>
        <name>Zn(2+)</name>
        <dbReference type="ChEBI" id="CHEBI:29105"/>
        <label>3</label>
    </ligand>
</feature>
<feature type="binding site" evidence="5">
    <location>
        <position position="157"/>
    </location>
    <ligand>
        <name>Zn(2+)</name>
        <dbReference type="ChEBI" id="CHEBI:29105"/>
        <label>3</label>
    </ligand>
</feature>
<feature type="binding site" evidence="5">
    <location>
        <position position="162"/>
    </location>
    <ligand>
        <name>Zn(2+)</name>
        <dbReference type="ChEBI" id="CHEBI:29105"/>
        <label>3</label>
    </ligand>
</feature>
<feature type="binding site" evidence="5">
    <location>
        <position position="167"/>
    </location>
    <ligand>
        <name>Zn(2+)</name>
        <dbReference type="ChEBI" id="CHEBI:29105"/>
        <label>3</label>
    </ligand>
</feature>
<feature type="binding site" evidence="5">
    <location>
        <position position="194"/>
    </location>
    <ligand>
        <name>Zn(2+)</name>
        <dbReference type="ChEBI" id="CHEBI:29105"/>
        <label>4</label>
    </ligand>
</feature>
<feature type="binding site" evidence="5">
    <location>
        <position position="197"/>
    </location>
    <ligand>
        <name>Zn(2+)</name>
        <dbReference type="ChEBI" id="CHEBI:29105"/>
        <label>4</label>
    </ligand>
</feature>
<feature type="binding site" evidence="5">
    <location>
        <position position="212"/>
    </location>
    <ligand>
        <name>Zn(2+)</name>
        <dbReference type="ChEBI" id="CHEBI:29105"/>
        <label>4</label>
    </ligand>
</feature>
<feature type="binding site" evidence="5">
    <location>
        <position position="215"/>
    </location>
    <ligand>
        <name>Zn(2+)</name>
        <dbReference type="ChEBI" id="CHEBI:29105"/>
        <label>4</label>
    </ligand>
</feature>
<feature type="binding site" evidence="5">
    <location>
        <position position="220"/>
    </location>
    <ligand>
        <name>Zn(2+)</name>
        <dbReference type="ChEBI" id="CHEBI:29105"/>
        <label>5</label>
    </ligand>
</feature>
<feature type="binding site" evidence="5">
    <location>
        <position position="223"/>
    </location>
    <ligand>
        <name>Zn(2+)</name>
        <dbReference type="ChEBI" id="CHEBI:29105"/>
        <label>5</label>
    </ligand>
</feature>
<feature type="binding site" evidence="5">
    <location>
        <position position="235"/>
    </location>
    <ligand>
        <name>Zn(2+)</name>
        <dbReference type="ChEBI" id="CHEBI:29105"/>
        <label>5</label>
    </ligand>
</feature>
<feature type="binding site" evidence="5">
    <location>
        <position position="241"/>
    </location>
    <ligand>
        <name>Zn(2+)</name>
        <dbReference type="ChEBI" id="CHEBI:29105"/>
        <label>5</label>
    </ligand>
</feature>
<proteinExistence type="evidence at transcript level"/>
<gene>
    <name type="primary">RNF144B</name>
</gene>
<accession>A5PK27</accession>
<sequence length="304" mass="33725">MGSVGRLHCLTMTAAENPTPGDLALVPLVTCKLCLCEQSLDKMTTLQECRCIFCTACLKQYMQLAIREGCGSPITCPDMVCLNHGTLQEAEIACLVPVDQFQLYQRLKFEREVHLDPCRTWCPVADCQTVCPVATSDPGQPVLVECPSCHLKFCSCCKDAWHAEVSCRDSQPGILPTEHGTLFGTETDAPIKQCPVCRVYIERNEGCAQMMCKNCKHTFCWYCLQNLDNDIFLRHYDRGPCRNKLGHSRASVMWNRTQVVGILVGLGIIALVTSPLLLLASPCIICCVCKSCRGKKKKHDPSTT</sequence>
<comment type="function">
    <text evidence="3">E3 ubiquitin-protein ligase which accepts ubiquitin from E2 ubiquitin-conjugating enzymes UBE2L3 and UBE2L6 in the form of a thioester and then directly transfers the ubiquitin to targeted substrates such as LCMT2, thereby promoting their degradation. Induces apoptosis via a p53/TP53-dependent but caspase-independent mechanism. Plays a crucial role in maintaining the genomic stability by controlling the degradation of multiple proteins involved in mitotic progression and DNA damage. Regulates epithelial homeostasis by mediating degradation of CDKN1A and isoform 2 of TP63. Plays a regulatory role in innate immunity by negatively regulating IRF3 activation and IFN-beta production. Mechanistically, inhibits TBK1 phosphorylation and 'Lys-63'-linked polyubiquitination independently of its E3 ligase activity. Alternatively, promotes 'Lys-27' and 'Lys-33'-linked ubiquitination of IFIH1/MDA5, promoting selective autophagic degradation of IFIH1/MDA5 to inhibit antiviral response.</text>
</comment>
<comment type="catalytic activity">
    <reaction evidence="3">
        <text>[E2 ubiquitin-conjugating enzyme]-S-ubiquitinyl-L-cysteine + [acceptor protein]-L-lysine = [E2 ubiquitin-conjugating enzyme]-L-cysteine + [acceptor protein]-N(6)-ubiquitinyl-L-lysine.</text>
        <dbReference type="EC" id="2.3.2.31"/>
    </reaction>
</comment>
<comment type="pathway">
    <text>Protein modification; protein ubiquitination.</text>
</comment>
<comment type="subunit">
    <text evidence="3">Interacts with UBE2L3, UBE2L6 and LCMT2, as well as with BAX. Interacts with TBK1; this interaction inhibits TBK1 phosphorylation and 'Lys-63'-linked polyubiquitination.</text>
</comment>
<comment type="subcellular location">
    <subcellularLocation>
        <location evidence="3">Mitochondrion membrane</location>
        <topology evidence="3">Single-pass membrane protein</topology>
    </subcellularLocation>
    <subcellularLocation>
        <location evidence="3">Cytoplasm</location>
    </subcellularLocation>
    <text evidence="3">Mostly cytosololic, accumulates in submitochondrial domains specifically upon apoptosis induction, in synchrony with BAX activation.</text>
</comment>
<comment type="domain">
    <text evidence="1">The RING-type zinc finger domain mediates binding to an E2 ubiquitin-conjugating enzyme. The transmembrane domain is essential for translocation to the mitochondria upon induction of apoptosis (By similarity).</text>
</comment>
<comment type="domain">
    <text evidence="2">Members of the RBR family are atypical E3 ligases. They interact with the E2 conjugating enzyme UBE2L3 and function like HECT-type E3 enzymes: they bind E2s via the first RING domain, but require an obligate trans-thiolation step during the ubiquitin transfer, requiring a conserved cysteine residue in the second RING domain.</text>
</comment>
<comment type="PTM">
    <text evidence="3">Auto-ubiquitinated.</text>
</comment>
<comment type="similarity">
    <text evidence="6">Belongs to the RBR family. RNF144 subfamily.</text>
</comment>
<comment type="caution">
    <text evidence="6">Lacks the His residue in the RING-type domain 2 that is one of the conserved features of the family.</text>
</comment>
<evidence type="ECO:0000250" key="1"/>
<evidence type="ECO:0000250" key="2">
    <source>
        <dbReference type="UniProtKB" id="O60260"/>
    </source>
</evidence>
<evidence type="ECO:0000250" key="3">
    <source>
        <dbReference type="UniProtKB" id="Q7Z419"/>
    </source>
</evidence>
<evidence type="ECO:0000255" key="4"/>
<evidence type="ECO:0000255" key="5">
    <source>
        <dbReference type="PROSITE-ProRule" id="PRU01221"/>
    </source>
</evidence>
<evidence type="ECO:0000305" key="6"/>
<organism>
    <name type="scientific">Bos taurus</name>
    <name type="common">Bovine</name>
    <dbReference type="NCBI Taxonomy" id="9913"/>
    <lineage>
        <taxon>Eukaryota</taxon>
        <taxon>Metazoa</taxon>
        <taxon>Chordata</taxon>
        <taxon>Craniata</taxon>
        <taxon>Vertebrata</taxon>
        <taxon>Euteleostomi</taxon>
        <taxon>Mammalia</taxon>
        <taxon>Eutheria</taxon>
        <taxon>Laurasiatheria</taxon>
        <taxon>Artiodactyla</taxon>
        <taxon>Ruminantia</taxon>
        <taxon>Pecora</taxon>
        <taxon>Bovidae</taxon>
        <taxon>Bovinae</taxon>
        <taxon>Bos</taxon>
    </lineage>
</organism>
<dbReference type="EC" id="2.3.2.31" evidence="2"/>
<dbReference type="EMBL" id="BC142329">
    <property type="protein sequence ID" value="AAI42330.1"/>
    <property type="molecule type" value="mRNA"/>
</dbReference>
<dbReference type="RefSeq" id="NP_001092498.1">
    <property type="nucleotide sequence ID" value="NM_001099028.1"/>
</dbReference>
<dbReference type="SMR" id="A5PK27"/>
<dbReference type="FunCoup" id="A5PK27">
    <property type="interactions" value="22"/>
</dbReference>
<dbReference type="STRING" id="9913.ENSBTAP00000071866"/>
<dbReference type="PaxDb" id="9913-ENSBTAP00000011931"/>
<dbReference type="GeneID" id="524166"/>
<dbReference type="KEGG" id="bta:524166"/>
<dbReference type="CTD" id="255488"/>
<dbReference type="eggNOG" id="KOG1815">
    <property type="taxonomic scope" value="Eukaryota"/>
</dbReference>
<dbReference type="InParanoid" id="A5PK27"/>
<dbReference type="OrthoDB" id="10009520at2759"/>
<dbReference type="UniPathway" id="UPA00143"/>
<dbReference type="Proteomes" id="UP000009136">
    <property type="component" value="Unplaced"/>
</dbReference>
<dbReference type="GO" id="GO:0005737">
    <property type="term" value="C:cytoplasm"/>
    <property type="evidence" value="ECO:0000250"/>
    <property type="project" value="UniProtKB"/>
</dbReference>
<dbReference type="GO" id="GO:0031966">
    <property type="term" value="C:mitochondrial membrane"/>
    <property type="evidence" value="ECO:0000250"/>
    <property type="project" value="UniProtKB"/>
</dbReference>
<dbReference type="GO" id="GO:0000151">
    <property type="term" value="C:ubiquitin ligase complex"/>
    <property type="evidence" value="ECO:0000318"/>
    <property type="project" value="GO_Central"/>
</dbReference>
<dbReference type="GO" id="GO:0031624">
    <property type="term" value="F:ubiquitin conjugating enzyme binding"/>
    <property type="evidence" value="ECO:0000318"/>
    <property type="project" value="GO_Central"/>
</dbReference>
<dbReference type="GO" id="GO:0061630">
    <property type="term" value="F:ubiquitin protein ligase activity"/>
    <property type="evidence" value="ECO:0000318"/>
    <property type="project" value="GO_Central"/>
</dbReference>
<dbReference type="GO" id="GO:0008270">
    <property type="term" value="F:zinc ion binding"/>
    <property type="evidence" value="ECO:0007669"/>
    <property type="project" value="UniProtKB-KW"/>
</dbReference>
<dbReference type="GO" id="GO:0006915">
    <property type="term" value="P:apoptotic process"/>
    <property type="evidence" value="ECO:0007669"/>
    <property type="project" value="UniProtKB-KW"/>
</dbReference>
<dbReference type="GO" id="GO:0043066">
    <property type="term" value="P:negative regulation of apoptotic process"/>
    <property type="evidence" value="ECO:0000250"/>
    <property type="project" value="UniProtKB"/>
</dbReference>
<dbReference type="GO" id="GO:0016567">
    <property type="term" value="P:protein ubiquitination"/>
    <property type="evidence" value="ECO:0007669"/>
    <property type="project" value="UniProtKB-UniPathway"/>
</dbReference>
<dbReference type="GO" id="GO:0006511">
    <property type="term" value="P:ubiquitin-dependent protein catabolic process"/>
    <property type="evidence" value="ECO:0000318"/>
    <property type="project" value="GO_Central"/>
</dbReference>
<dbReference type="CDD" id="cd20367">
    <property type="entry name" value="BRcat_RBR_RNF144B"/>
    <property type="match status" value="1"/>
</dbReference>
<dbReference type="CDD" id="cd16778">
    <property type="entry name" value="mRING-HC-C4C4_RBR_RNF144B"/>
    <property type="match status" value="1"/>
</dbReference>
<dbReference type="CDD" id="cd20369">
    <property type="entry name" value="Rcat_RBR_RNF144B"/>
    <property type="match status" value="1"/>
</dbReference>
<dbReference type="FunFam" id="1.20.120.1750:FF:000010">
    <property type="entry name" value="RBR-type E3 ubiquitin transferase"/>
    <property type="match status" value="1"/>
</dbReference>
<dbReference type="FunFam" id="3.30.40.10:FF:000051">
    <property type="entry name" value="RBR-type E3 ubiquitin transferase"/>
    <property type="match status" value="1"/>
</dbReference>
<dbReference type="Gene3D" id="1.20.120.1750">
    <property type="match status" value="1"/>
</dbReference>
<dbReference type="Gene3D" id="3.30.40.10">
    <property type="entry name" value="Zinc/RING finger domain, C3HC4 (zinc finger)"/>
    <property type="match status" value="1"/>
</dbReference>
<dbReference type="InterPro" id="IPR031127">
    <property type="entry name" value="E3_UB_ligase_RBR"/>
</dbReference>
<dbReference type="InterPro" id="IPR002867">
    <property type="entry name" value="IBR_dom"/>
</dbReference>
<dbReference type="InterPro" id="IPR044066">
    <property type="entry name" value="TRIAD_supradom"/>
</dbReference>
<dbReference type="InterPro" id="IPR001841">
    <property type="entry name" value="Znf_RING"/>
</dbReference>
<dbReference type="InterPro" id="IPR013083">
    <property type="entry name" value="Znf_RING/FYVE/PHD"/>
</dbReference>
<dbReference type="InterPro" id="IPR017907">
    <property type="entry name" value="Znf_RING_CS"/>
</dbReference>
<dbReference type="PANTHER" id="PTHR11685">
    <property type="entry name" value="RBR FAMILY RING FINGER AND IBR DOMAIN-CONTAINING"/>
    <property type="match status" value="1"/>
</dbReference>
<dbReference type="Pfam" id="PF01485">
    <property type="entry name" value="IBR"/>
    <property type="match status" value="1"/>
</dbReference>
<dbReference type="Pfam" id="PF22191">
    <property type="entry name" value="IBR_1"/>
    <property type="match status" value="1"/>
</dbReference>
<dbReference type="SMART" id="SM00647">
    <property type="entry name" value="IBR"/>
    <property type="match status" value="2"/>
</dbReference>
<dbReference type="SMART" id="SM00184">
    <property type="entry name" value="RING"/>
    <property type="match status" value="2"/>
</dbReference>
<dbReference type="SUPFAM" id="SSF57850">
    <property type="entry name" value="RING/U-box"/>
    <property type="match status" value="3"/>
</dbReference>
<dbReference type="PROSITE" id="PS51873">
    <property type="entry name" value="TRIAD"/>
    <property type="match status" value="1"/>
</dbReference>
<dbReference type="PROSITE" id="PS00518">
    <property type="entry name" value="ZF_RING_1"/>
    <property type="match status" value="1"/>
</dbReference>
<keyword id="KW-0053">Apoptosis</keyword>
<keyword id="KW-0963">Cytoplasm</keyword>
<keyword id="KW-0472">Membrane</keyword>
<keyword id="KW-0479">Metal-binding</keyword>
<keyword id="KW-0496">Mitochondrion</keyword>
<keyword id="KW-1185">Reference proteome</keyword>
<keyword id="KW-0677">Repeat</keyword>
<keyword id="KW-0808">Transferase</keyword>
<keyword id="KW-0812">Transmembrane</keyword>
<keyword id="KW-1133">Transmembrane helix</keyword>
<keyword id="KW-0832">Ubl conjugation</keyword>
<keyword id="KW-0833">Ubl conjugation pathway</keyword>
<keyword id="KW-0862">Zinc</keyword>
<keyword id="KW-0863">Zinc-finger</keyword>
<protein>
    <recommendedName>
        <fullName>E3 ubiquitin-protein ligase RNF144B</fullName>
        <ecNumber evidence="2">2.3.2.31</ecNumber>
    </recommendedName>
    <alternativeName>
        <fullName>RING finger protein 144B</fullName>
    </alternativeName>
</protein>